<sequence length="268" mass="30864">MATYIVGDIQGCFDELQQLLKRVNFSTQHDQLWLAGDLVARGPKSLETLRFVKSLGDSAKVVLGNHDLHLLAVSYGLKKRKDKDKTTPIFLAKDREELLSWLAKQPLLAEHDEFVMCHAGISPQWDLETARQCAREVERIIQGEELPWLLKNMYSNLPDLWDDSLEGLDRYRYIINAFTRMRFCFSDGRLDMDCKLPPQEVTGDQLVPWFELPHRIPLEKTVLFGHWAALQGYIDEKVIGLDTGCVWGGSLTMIRWEDKQLFTQDALD</sequence>
<reference key="1">
    <citation type="journal article" date="2003" name="Lancet">
        <title>Genome sequence of Vibrio parahaemolyticus: a pathogenic mechanism distinct from that of V. cholerae.</title>
        <authorList>
            <person name="Makino K."/>
            <person name="Oshima K."/>
            <person name="Kurokawa K."/>
            <person name="Yokoyama K."/>
            <person name="Uda T."/>
            <person name="Tagomori K."/>
            <person name="Iijima Y."/>
            <person name="Najima M."/>
            <person name="Nakano M."/>
            <person name="Yamashita A."/>
            <person name="Kubota Y."/>
            <person name="Kimura S."/>
            <person name="Yasunaga T."/>
            <person name="Honda T."/>
            <person name="Shinagawa H."/>
            <person name="Hattori M."/>
            <person name="Iida T."/>
        </authorList>
    </citation>
    <scope>NUCLEOTIDE SEQUENCE [LARGE SCALE GENOMIC DNA]</scope>
    <source>
        <strain>RIMD 2210633</strain>
    </source>
</reference>
<dbReference type="EC" id="3.6.1.41" evidence="1"/>
<dbReference type="EMBL" id="BA000031">
    <property type="protein sequence ID" value="BAC58597.1"/>
    <property type="molecule type" value="Genomic_DNA"/>
</dbReference>
<dbReference type="RefSeq" id="NP_796713.1">
    <property type="nucleotide sequence ID" value="NC_004603.1"/>
</dbReference>
<dbReference type="RefSeq" id="WP_005480531.1">
    <property type="nucleotide sequence ID" value="NC_004603.1"/>
</dbReference>
<dbReference type="SMR" id="Q87ST8"/>
<dbReference type="GeneID" id="1187801"/>
<dbReference type="KEGG" id="vpa:VP0334"/>
<dbReference type="PATRIC" id="fig|223926.6.peg.321"/>
<dbReference type="eggNOG" id="COG0639">
    <property type="taxonomic scope" value="Bacteria"/>
</dbReference>
<dbReference type="HOGENOM" id="CLU_056184_2_0_6"/>
<dbReference type="Proteomes" id="UP000002493">
    <property type="component" value="Chromosome 1"/>
</dbReference>
<dbReference type="GO" id="GO:0008803">
    <property type="term" value="F:bis(5'-nucleosyl)-tetraphosphatase (symmetrical) activity"/>
    <property type="evidence" value="ECO:0007669"/>
    <property type="project" value="UniProtKB-UniRule"/>
</dbReference>
<dbReference type="CDD" id="cd07422">
    <property type="entry name" value="MPP_ApaH"/>
    <property type="match status" value="1"/>
</dbReference>
<dbReference type="Gene3D" id="3.60.21.10">
    <property type="match status" value="1"/>
</dbReference>
<dbReference type="HAMAP" id="MF_00199">
    <property type="entry name" value="ApaH"/>
    <property type="match status" value="1"/>
</dbReference>
<dbReference type="InterPro" id="IPR004617">
    <property type="entry name" value="ApaH"/>
</dbReference>
<dbReference type="InterPro" id="IPR004843">
    <property type="entry name" value="Calcineurin-like_PHP_ApaH"/>
</dbReference>
<dbReference type="InterPro" id="IPR029052">
    <property type="entry name" value="Metallo-depent_PP-like"/>
</dbReference>
<dbReference type="NCBIfam" id="TIGR00668">
    <property type="entry name" value="apaH"/>
    <property type="match status" value="1"/>
</dbReference>
<dbReference type="NCBIfam" id="NF001204">
    <property type="entry name" value="PRK00166.1"/>
    <property type="match status" value="1"/>
</dbReference>
<dbReference type="PANTHER" id="PTHR40942">
    <property type="match status" value="1"/>
</dbReference>
<dbReference type="PANTHER" id="PTHR40942:SF4">
    <property type="entry name" value="CYTOCHROME C5"/>
    <property type="match status" value="1"/>
</dbReference>
<dbReference type="Pfam" id="PF00149">
    <property type="entry name" value="Metallophos"/>
    <property type="match status" value="1"/>
</dbReference>
<dbReference type="PIRSF" id="PIRSF000903">
    <property type="entry name" value="B5n-ttraPtase_sm"/>
    <property type="match status" value="1"/>
</dbReference>
<dbReference type="SUPFAM" id="SSF56300">
    <property type="entry name" value="Metallo-dependent phosphatases"/>
    <property type="match status" value="1"/>
</dbReference>
<accession>Q87ST8</accession>
<gene>
    <name evidence="1" type="primary">apaH</name>
    <name type="ordered locus">VP0334</name>
</gene>
<organism>
    <name type="scientific">Vibrio parahaemolyticus serotype O3:K6 (strain RIMD 2210633)</name>
    <dbReference type="NCBI Taxonomy" id="223926"/>
    <lineage>
        <taxon>Bacteria</taxon>
        <taxon>Pseudomonadati</taxon>
        <taxon>Pseudomonadota</taxon>
        <taxon>Gammaproteobacteria</taxon>
        <taxon>Vibrionales</taxon>
        <taxon>Vibrionaceae</taxon>
        <taxon>Vibrio</taxon>
    </lineage>
</organism>
<feature type="chain" id="PRO_0000198013" description="Bis(5'-nucleosyl)-tetraphosphatase, symmetrical">
    <location>
        <begin position="1"/>
        <end position="268"/>
    </location>
</feature>
<protein>
    <recommendedName>
        <fullName evidence="1">Bis(5'-nucleosyl)-tetraphosphatase, symmetrical</fullName>
        <ecNumber evidence="1">3.6.1.41</ecNumber>
    </recommendedName>
    <alternativeName>
        <fullName evidence="1">Ap4A hydrolase</fullName>
    </alternativeName>
    <alternativeName>
        <fullName evidence="1">Diadenosine 5',5'''-P1,P4-tetraphosphate pyrophosphohydrolase</fullName>
    </alternativeName>
    <alternativeName>
        <fullName evidence="1">Diadenosine tetraphosphatase</fullName>
    </alternativeName>
</protein>
<evidence type="ECO:0000255" key="1">
    <source>
        <dbReference type="HAMAP-Rule" id="MF_00199"/>
    </source>
</evidence>
<keyword id="KW-0378">Hydrolase</keyword>
<proteinExistence type="inferred from homology"/>
<name>APAH_VIBPA</name>
<comment type="function">
    <text evidence="1">Hydrolyzes diadenosine 5',5'''-P1,P4-tetraphosphate to yield ADP.</text>
</comment>
<comment type="catalytic activity">
    <reaction evidence="1">
        <text>P(1),P(4)-bis(5'-adenosyl) tetraphosphate + H2O = 2 ADP + 2 H(+)</text>
        <dbReference type="Rhea" id="RHEA:24252"/>
        <dbReference type="ChEBI" id="CHEBI:15377"/>
        <dbReference type="ChEBI" id="CHEBI:15378"/>
        <dbReference type="ChEBI" id="CHEBI:58141"/>
        <dbReference type="ChEBI" id="CHEBI:456216"/>
        <dbReference type="EC" id="3.6.1.41"/>
    </reaction>
</comment>
<comment type="similarity">
    <text evidence="1">Belongs to the Ap4A hydrolase family.</text>
</comment>